<accession>Q9JQT4</accession>
<accession>A1INX2</accession>
<proteinExistence type="inferred from homology"/>
<comment type="subunit">
    <text evidence="1">Part of the 50S ribosomal subunit.</text>
</comment>
<comment type="similarity">
    <text evidence="1">Belongs to the universal ribosomal protein uL30 family.</text>
</comment>
<feature type="chain" id="PRO_0000273811" description="Large ribosomal subunit protein uL30">
    <location>
        <begin position="1"/>
        <end position="61"/>
    </location>
</feature>
<protein>
    <recommendedName>
        <fullName evidence="1">Large ribosomal subunit protein uL30</fullName>
    </recommendedName>
    <alternativeName>
        <fullName evidence="2">50S ribosomal protein L30</fullName>
    </alternativeName>
</protein>
<dbReference type="EMBL" id="AL157959">
    <property type="protein sequence ID" value="CAM07429.1"/>
    <property type="molecule type" value="Genomic_DNA"/>
</dbReference>
<dbReference type="PIR" id="B81233">
    <property type="entry name" value="B81233"/>
</dbReference>
<dbReference type="RefSeq" id="WP_002215447.1">
    <property type="nucleotide sequence ID" value="NC_003116.1"/>
</dbReference>
<dbReference type="SMR" id="Q9JQT4"/>
<dbReference type="EnsemblBacteria" id="CAM07429">
    <property type="protein sequence ID" value="CAM07429"/>
    <property type="gene ID" value="NMA0111"/>
</dbReference>
<dbReference type="GeneID" id="93387235"/>
<dbReference type="KEGG" id="nma:NMA0111"/>
<dbReference type="HOGENOM" id="CLU_131047_1_4_4"/>
<dbReference type="Proteomes" id="UP000000626">
    <property type="component" value="Chromosome"/>
</dbReference>
<dbReference type="GO" id="GO:0022625">
    <property type="term" value="C:cytosolic large ribosomal subunit"/>
    <property type="evidence" value="ECO:0007669"/>
    <property type="project" value="TreeGrafter"/>
</dbReference>
<dbReference type="GO" id="GO:0003735">
    <property type="term" value="F:structural constituent of ribosome"/>
    <property type="evidence" value="ECO:0007669"/>
    <property type="project" value="InterPro"/>
</dbReference>
<dbReference type="GO" id="GO:0006412">
    <property type="term" value="P:translation"/>
    <property type="evidence" value="ECO:0007669"/>
    <property type="project" value="UniProtKB-UniRule"/>
</dbReference>
<dbReference type="CDD" id="cd01658">
    <property type="entry name" value="Ribosomal_L30"/>
    <property type="match status" value="1"/>
</dbReference>
<dbReference type="FunFam" id="3.30.1390.20:FF:000001">
    <property type="entry name" value="50S ribosomal protein L30"/>
    <property type="match status" value="1"/>
</dbReference>
<dbReference type="Gene3D" id="3.30.1390.20">
    <property type="entry name" value="Ribosomal protein L30, ferredoxin-like fold domain"/>
    <property type="match status" value="1"/>
</dbReference>
<dbReference type="HAMAP" id="MF_01371_B">
    <property type="entry name" value="Ribosomal_uL30_B"/>
    <property type="match status" value="1"/>
</dbReference>
<dbReference type="InterPro" id="IPR036919">
    <property type="entry name" value="Ribo_uL30_ferredoxin-like_sf"/>
</dbReference>
<dbReference type="InterPro" id="IPR005996">
    <property type="entry name" value="Ribosomal_uL30_bac-type"/>
</dbReference>
<dbReference type="InterPro" id="IPR016082">
    <property type="entry name" value="Ribosomal_uL30_ferredoxin-like"/>
</dbReference>
<dbReference type="NCBIfam" id="TIGR01308">
    <property type="entry name" value="rpmD_bact"/>
    <property type="match status" value="1"/>
</dbReference>
<dbReference type="PANTHER" id="PTHR15892:SF2">
    <property type="entry name" value="LARGE RIBOSOMAL SUBUNIT PROTEIN UL30M"/>
    <property type="match status" value="1"/>
</dbReference>
<dbReference type="PANTHER" id="PTHR15892">
    <property type="entry name" value="MITOCHONDRIAL RIBOSOMAL PROTEIN L30"/>
    <property type="match status" value="1"/>
</dbReference>
<dbReference type="Pfam" id="PF00327">
    <property type="entry name" value="Ribosomal_L30"/>
    <property type="match status" value="1"/>
</dbReference>
<dbReference type="PIRSF" id="PIRSF002211">
    <property type="entry name" value="Ribosomal_L30_bac-type"/>
    <property type="match status" value="1"/>
</dbReference>
<dbReference type="SUPFAM" id="SSF55129">
    <property type="entry name" value="Ribosomal protein L30p/L7e"/>
    <property type="match status" value="1"/>
</dbReference>
<organism>
    <name type="scientific">Neisseria meningitidis serogroup A / serotype 4A (strain DSM 15465 / Z2491)</name>
    <dbReference type="NCBI Taxonomy" id="122587"/>
    <lineage>
        <taxon>Bacteria</taxon>
        <taxon>Pseudomonadati</taxon>
        <taxon>Pseudomonadota</taxon>
        <taxon>Betaproteobacteria</taxon>
        <taxon>Neisseriales</taxon>
        <taxon>Neisseriaceae</taxon>
        <taxon>Neisseria</taxon>
    </lineage>
</organism>
<reference key="1">
    <citation type="journal article" date="2000" name="Nature">
        <title>Complete DNA sequence of a serogroup A strain of Neisseria meningitidis Z2491.</title>
        <authorList>
            <person name="Parkhill J."/>
            <person name="Achtman M."/>
            <person name="James K.D."/>
            <person name="Bentley S.D."/>
            <person name="Churcher C.M."/>
            <person name="Klee S.R."/>
            <person name="Morelli G."/>
            <person name="Basham D."/>
            <person name="Brown D."/>
            <person name="Chillingworth T."/>
            <person name="Davies R.M."/>
            <person name="Davis P."/>
            <person name="Devlin K."/>
            <person name="Feltwell T."/>
            <person name="Hamlin N."/>
            <person name="Holroyd S."/>
            <person name="Jagels K."/>
            <person name="Leather S."/>
            <person name="Moule S."/>
            <person name="Mungall K.L."/>
            <person name="Quail M.A."/>
            <person name="Rajandream M.A."/>
            <person name="Rutherford K.M."/>
            <person name="Simmonds M."/>
            <person name="Skelton J."/>
            <person name="Whitehead S."/>
            <person name="Spratt B.G."/>
            <person name="Barrell B.G."/>
        </authorList>
    </citation>
    <scope>NUCLEOTIDE SEQUENCE [LARGE SCALE GENOMIC DNA]</scope>
    <source>
        <strain>DSM 15465 / Z2491</strain>
    </source>
</reference>
<name>RL30_NEIMA</name>
<sequence length="61" mass="6946">MAEQKKIRVTLVKSLIGTIESHRACARGLGLRRREHTVEVLDTPENRGMINKISYLLKVES</sequence>
<keyword id="KW-0687">Ribonucleoprotein</keyword>
<keyword id="KW-0689">Ribosomal protein</keyword>
<gene>
    <name evidence="1" type="primary">rpmD</name>
    <name type="ordered locus">NMA0111</name>
</gene>
<evidence type="ECO:0000255" key="1">
    <source>
        <dbReference type="HAMAP-Rule" id="MF_01371"/>
    </source>
</evidence>
<evidence type="ECO:0000305" key="2"/>